<organism>
    <name type="scientific">Oryza sativa subsp. japonica</name>
    <name type="common">Rice</name>
    <dbReference type="NCBI Taxonomy" id="39947"/>
    <lineage>
        <taxon>Eukaryota</taxon>
        <taxon>Viridiplantae</taxon>
        <taxon>Streptophyta</taxon>
        <taxon>Embryophyta</taxon>
        <taxon>Tracheophyta</taxon>
        <taxon>Spermatophyta</taxon>
        <taxon>Magnoliopsida</taxon>
        <taxon>Liliopsida</taxon>
        <taxon>Poales</taxon>
        <taxon>Poaceae</taxon>
        <taxon>BOP clade</taxon>
        <taxon>Oryzoideae</taxon>
        <taxon>Oryzeae</taxon>
        <taxon>Oryzinae</taxon>
        <taxon>Oryza</taxon>
        <taxon>Oryza sativa</taxon>
    </lineage>
</organism>
<evidence type="ECO:0000255" key="1">
    <source>
        <dbReference type="PROSITE-ProRule" id="PRU00805"/>
    </source>
</evidence>
<evidence type="ECO:0000269" key="2">
    <source>
    </source>
</evidence>
<evidence type="ECO:0000269" key="3">
    <source>
    </source>
</evidence>
<evidence type="ECO:0000269" key="4">
    <source>
    </source>
</evidence>
<evidence type="ECO:0000303" key="5">
    <source>
    </source>
</evidence>
<evidence type="ECO:0000303" key="6">
    <source>
    </source>
</evidence>
<evidence type="ECO:0000305" key="7"/>
<evidence type="ECO:0000312" key="8">
    <source>
        <dbReference type="EMBL" id="BAD23370.1"/>
    </source>
</evidence>
<evidence type="ECO:0000312" key="9">
    <source>
        <dbReference type="EMBL" id="BAD23538.1"/>
    </source>
</evidence>
<evidence type="ECO:0000312" key="10">
    <source>
        <dbReference type="EMBL" id="BAF24572.1"/>
    </source>
</evidence>
<evidence type="ECO:0000312" key="11">
    <source>
        <dbReference type="EMBL" id="EEE69249.1"/>
    </source>
</evidence>
<feature type="chain" id="PRO_0000449521" description="Homoarginine-6-hydroxylase 2-ODD-233">
    <location>
        <begin position="1"/>
        <end position="328"/>
    </location>
</feature>
<feature type="domain" description="Fe2OG dioxygenase" evidence="1">
    <location>
        <begin position="183"/>
        <end position="288"/>
    </location>
</feature>
<feature type="binding site" evidence="1">
    <location>
        <position position="210"/>
    </location>
    <ligand>
        <name>Fe cation</name>
        <dbReference type="ChEBI" id="CHEBI:24875"/>
    </ligand>
</feature>
<feature type="binding site" evidence="1">
    <location>
        <position position="212"/>
    </location>
    <ligand>
        <name>Fe cation</name>
        <dbReference type="ChEBI" id="CHEBI:24875"/>
    </ligand>
</feature>
<feature type="binding site" evidence="1">
    <location>
        <position position="268"/>
    </location>
    <ligand>
        <name>Fe cation</name>
        <dbReference type="ChEBI" id="CHEBI:24875"/>
    </ligand>
</feature>
<feature type="binding site" evidence="1">
    <location>
        <position position="278"/>
    </location>
    <ligand>
        <name>2-oxoglutarate</name>
        <dbReference type="ChEBI" id="CHEBI:16810"/>
    </ligand>
</feature>
<keyword id="KW-0963">Cytoplasm</keyword>
<keyword id="KW-0223">Dioxygenase</keyword>
<keyword id="KW-0408">Iron</keyword>
<keyword id="KW-0479">Metal-binding</keyword>
<keyword id="KW-0560">Oxidoreductase</keyword>
<keyword id="KW-1185">Reference proteome</keyword>
<keyword id="KW-0847">Vitamin C</keyword>
<dbReference type="EC" id="1.14.11.-" evidence="1 4 2"/>
<dbReference type="EMBL" id="AP005550">
    <property type="protein sequence ID" value="BAD23370.1"/>
    <property type="molecule type" value="Genomic_DNA"/>
</dbReference>
<dbReference type="EMBL" id="AP005729">
    <property type="protein sequence ID" value="BAD23538.1"/>
    <property type="molecule type" value="Genomic_DNA"/>
</dbReference>
<dbReference type="EMBL" id="AP008215">
    <property type="protein sequence ID" value="BAF24572.1"/>
    <property type="molecule type" value="Genomic_DNA"/>
</dbReference>
<dbReference type="EMBL" id="AP014965">
    <property type="protein sequence ID" value="BAT07007.1"/>
    <property type="status" value="ALT_INIT"/>
    <property type="molecule type" value="Genomic_DNA"/>
</dbReference>
<dbReference type="EMBL" id="CM000146">
    <property type="protein sequence ID" value="EEE69249.1"/>
    <property type="molecule type" value="Genomic_DNA"/>
</dbReference>
<dbReference type="SMR" id="Q6K332"/>
<dbReference type="FunCoup" id="Q6K332">
    <property type="interactions" value="41"/>
</dbReference>
<dbReference type="STRING" id="39947.A0A0P0XIU3"/>
<dbReference type="PaxDb" id="39947-A0A0P0XIU3"/>
<dbReference type="KEGG" id="dosa:Os09g0245500"/>
<dbReference type="eggNOG" id="KOG0143">
    <property type="taxonomic scope" value="Eukaryota"/>
</dbReference>
<dbReference type="HOGENOM" id="CLU_010119_6_0_1"/>
<dbReference type="InParanoid" id="Q6K332"/>
<dbReference type="Proteomes" id="UP000000763">
    <property type="component" value="Chromosome 9"/>
</dbReference>
<dbReference type="Proteomes" id="UP000007752">
    <property type="component" value="Chromosome 9"/>
</dbReference>
<dbReference type="Proteomes" id="UP000059680">
    <property type="component" value="Chromosome 9"/>
</dbReference>
<dbReference type="GO" id="GO:0005737">
    <property type="term" value="C:cytoplasm"/>
    <property type="evidence" value="ECO:0007669"/>
    <property type="project" value="UniProtKB-SubCell"/>
</dbReference>
<dbReference type="GO" id="GO:0016706">
    <property type="term" value="F:2-oxoglutarate-dependent dioxygenase activity"/>
    <property type="evidence" value="ECO:0000314"/>
    <property type="project" value="UniProtKB"/>
</dbReference>
<dbReference type="GO" id="GO:0031418">
    <property type="term" value="F:L-ascorbic acid binding"/>
    <property type="evidence" value="ECO:0007669"/>
    <property type="project" value="UniProtKB-KW"/>
</dbReference>
<dbReference type="GO" id="GO:0046872">
    <property type="term" value="F:metal ion binding"/>
    <property type="evidence" value="ECO:0007669"/>
    <property type="project" value="UniProtKB-KW"/>
</dbReference>
<dbReference type="FunFam" id="2.60.120.330:FF:000024">
    <property type="entry name" value="Probable 2-oxoglutarate-dependent dioxygenase At3g49630"/>
    <property type="match status" value="1"/>
</dbReference>
<dbReference type="Gene3D" id="2.60.120.330">
    <property type="entry name" value="B-lactam Antibiotic, Isopenicillin N Synthase, Chain"/>
    <property type="match status" value="1"/>
</dbReference>
<dbReference type="InterPro" id="IPR026992">
    <property type="entry name" value="DIOX_N"/>
</dbReference>
<dbReference type="InterPro" id="IPR044861">
    <property type="entry name" value="IPNS-like_FE2OG_OXY"/>
</dbReference>
<dbReference type="InterPro" id="IPR027443">
    <property type="entry name" value="IPNS-like_sf"/>
</dbReference>
<dbReference type="InterPro" id="IPR050231">
    <property type="entry name" value="Iron_ascorbate_oxido_reductase"/>
</dbReference>
<dbReference type="InterPro" id="IPR005123">
    <property type="entry name" value="Oxoglu/Fe-dep_dioxygenase_dom"/>
</dbReference>
<dbReference type="PANTHER" id="PTHR47990">
    <property type="entry name" value="2-OXOGLUTARATE (2OG) AND FE(II)-DEPENDENT OXYGENASE SUPERFAMILY PROTEIN-RELATED"/>
    <property type="match status" value="1"/>
</dbReference>
<dbReference type="Pfam" id="PF03171">
    <property type="entry name" value="2OG-FeII_Oxy"/>
    <property type="match status" value="1"/>
</dbReference>
<dbReference type="Pfam" id="PF14226">
    <property type="entry name" value="DIOX_N"/>
    <property type="match status" value="1"/>
</dbReference>
<dbReference type="PRINTS" id="PR00682">
    <property type="entry name" value="IPNSYNTHASE"/>
</dbReference>
<dbReference type="SUPFAM" id="SSF51197">
    <property type="entry name" value="Clavaminate synthase-like"/>
    <property type="match status" value="1"/>
</dbReference>
<dbReference type="PROSITE" id="PS51471">
    <property type="entry name" value="FE2OG_OXY"/>
    <property type="match status" value="1"/>
</dbReference>
<gene>
    <name evidence="5 6" type="primary">2ODD33</name>
    <name evidence="10" type="ordered locus">Os09g0245500</name>
    <name evidence="7" type="ordered locus">LOC_Os09g07020</name>
    <name evidence="8" type="ORF">OJ1058_F03.5</name>
    <name evidence="11" type="ORF">OsJ_28501</name>
    <name evidence="9" type="ORF">OSJNBa0069P02.20</name>
</gene>
<reference key="1">
    <citation type="journal article" date="2005" name="Nature">
        <title>The map-based sequence of the rice genome.</title>
        <authorList>
            <consortium name="International rice genome sequencing project (IRGSP)"/>
        </authorList>
    </citation>
    <scope>NUCLEOTIDE SEQUENCE [LARGE SCALE GENOMIC DNA]</scope>
    <source>
        <strain>cv. Nipponbare</strain>
    </source>
</reference>
<reference key="2">
    <citation type="journal article" date="2008" name="Nucleic Acids Res.">
        <title>The rice annotation project database (RAP-DB): 2008 update.</title>
        <authorList>
            <consortium name="The rice annotation project (RAP)"/>
        </authorList>
    </citation>
    <scope>GENOME REANNOTATION</scope>
    <source>
        <strain>cv. Nipponbare</strain>
    </source>
</reference>
<reference key="3">
    <citation type="journal article" date="2013" name="Rice">
        <title>Improvement of the Oryza sativa Nipponbare reference genome using next generation sequence and optical map data.</title>
        <authorList>
            <person name="Kawahara Y."/>
            <person name="de la Bastide M."/>
            <person name="Hamilton J.P."/>
            <person name="Kanamori H."/>
            <person name="McCombie W.R."/>
            <person name="Ouyang S."/>
            <person name="Schwartz D.C."/>
            <person name="Tanaka T."/>
            <person name="Wu J."/>
            <person name="Zhou S."/>
            <person name="Childs K.L."/>
            <person name="Davidson R.M."/>
            <person name="Lin H."/>
            <person name="Quesada-Ocampo L."/>
            <person name="Vaillancourt B."/>
            <person name="Sakai H."/>
            <person name="Lee S.S."/>
            <person name="Kim J."/>
            <person name="Numa H."/>
            <person name="Itoh T."/>
            <person name="Buell C.R."/>
            <person name="Matsumoto T."/>
        </authorList>
    </citation>
    <scope>GENOME REANNOTATION</scope>
    <source>
        <strain>cv. Nipponbare</strain>
    </source>
</reference>
<reference key="4">
    <citation type="journal article" date="2005" name="PLoS Biol.">
        <title>The genomes of Oryza sativa: a history of duplications.</title>
        <authorList>
            <person name="Yu J."/>
            <person name="Wang J."/>
            <person name="Lin W."/>
            <person name="Li S."/>
            <person name="Li H."/>
            <person name="Zhou J."/>
            <person name="Ni P."/>
            <person name="Dong W."/>
            <person name="Hu S."/>
            <person name="Zeng C."/>
            <person name="Zhang J."/>
            <person name="Zhang Y."/>
            <person name="Li R."/>
            <person name="Xu Z."/>
            <person name="Li S."/>
            <person name="Li X."/>
            <person name="Zheng H."/>
            <person name="Cong L."/>
            <person name="Lin L."/>
            <person name="Yin J."/>
            <person name="Geng J."/>
            <person name="Li G."/>
            <person name="Shi J."/>
            <person name="Liu J."/>
            <person name="Lv H."/>
            <person name="Li J."/>
            <person name="Wang J."/>
            <person name="Deng Y."/>
            <person name="Ran L."/>
            <person name="Shi X."/>
            <person name="Wang X."/>
            <person name="Wu Q."/>
            <person name="Li C."/>
            <person name="Ren X."/>
            <person name="Wang J."/>
            <person name="Wang X."/>
            <person name="Li D."/>
            <person name="Liu D."/>
            <person name="Zhang X."/>
            <person name="Ji Z."/>
            <person name="Zhao W."/>
            <person name="Sun Y."/>
            <person name="Zhang Z."/>
            <person name="Bao J."/>
            <person name="Han Y."/>
            <person name="Dong L."/>
            <person name="Ji J."/>
            <person name="Chen P."/>
            <person name="Wu S."/>
            <person name="Liu J."/>
            <person name="Xiao Y."/>
            <person name="Bu D."/>
            <person name="Tan J."/>
            <person name="Yang L."/>
            <person name="Ye C."/>
            <person name="Zhang J."/>
            <person name="Xu J."/>
            <person name="Zhou Y."/>
            <person name="Yu Y."/>
            <person name="Zhang B."/>
            <person name="Zhuang S."/>
            <person name="Wei H."/>
            <person name="Liu B."/>
            <person name="Lei M."/>
            <person name="Yu H."/>
            <person name="Li Y."/>
            <person name="Xu H."/>
            <person name="Wei S."/>
            <person name="He X."/>
            <person name="Fang L."/>
            <person name="Zhang Z."/>
            <person name="Zhang Y."/>
            <person name="Huang X."/>
            <person name="Su Z."/>
            <person name="Tong W."/>
            <person name="Li J."/>
            <person name="Tong Z."/>
            <person name="Li S."/>
            <person name="Ye J."/>
            <person name="Wang L."/>
            <person name="Fang L."/>
            <person name="Lei T."/>
            <person name="Chen C.-S."/>
            <person name="Chen H.-C."/>
            <person name="Xu Z."/>
            <person name="Li H."/>
            <person name="Huang H."/>
            <person name="Zhang F."/>
            <person name="Xu H."/>
            <person name="Li N."/>
            <person name="Zhao C."/>
            <person name="Li S."/>
            <person name="Dong L."/>
            <person name="Huang Y."/>
            <person name="Li L."/>
            <person name="Xi Y."/>
            <person name="Qi Q."/>
            <person name="Li W."/>
            <person name="Zhang B."/>
            <person name="Hu W."/>
            <person name="Zhang Y."/>
            <person name="Tian X."/>
            <person name="Jiao Y."/>
            <person name="Liang X."/>
            <person name="Jin J."/>
            <person name="Gao L."/>
            <person name="Zheng W."/>
            <person name="Hao B."/>
            <person name="Liu S.-M."/>
            <person name="Wang W."/>
            <person name="Yuan L."/>
            <person name="Cao M."/>
            <person name="McDermott J."/>
            <person name="Samudrala R."/>
            <person name="Wang J."/>
            <person name="Wong G.K.-S."/>
            <person name="Yang H."/>
        </authorList>
    </citation>
    <scope>NUCLEOTIDE SEQUENCE [LARGE SCALE GENOMIC DNA]</scope>
    <source>
        <strain>cv. Nipponbare</strain>
    </source>
</reference>
<reference key="5">
    <citation type="journal article" date="2015" name="J. Pineal Res.">
        <title>Molecular cloning of melatonin 2-hydroxylase responsible for 2-hydroxymelatonin production in rice (Oryza sativa).</title>
        <authorList>
            <person name="Byeon Y."/>
            <person name="Back K."/>
        </authorList>
    </citation>
    <scope>FUNCTION</scope>
    <scope>CATALYTIC ACTIVITY</scope>
    <scope>COFACTOR</scope>
    <scope>BIOPHYSICOCHEMICAL PROPERTIES</scope>
    <scope>TISSUE SPECIFICITY</scope>
</reference>
<reference key="6">
    <citation type="journal article" date="2015" name="J. Pineal Res.">
        <title>Coordinated regulation of melatonin synthesis and degradation genes in rice leaves in response to cadmium treatment.</title>
        <authorList>
            <person name="Byeon Y."/>
            <person name="Lee H.Y."/>
            <person name="Hwang O.J."/>
            <person name="Lee H.J."/>
            <person name="Lee K."/>
            <person name="Back K."/>
        </authorList>
    </citation>
    <scope>SUBCELLULAR LOCATION</scope>
    <scope>INDUCTION BY CADMIUM</scope>
</reference>
<reference key="7">
    <citation type="journal article" date="2024" name="Elife">
        <title>Guanidine production by plant homoarginine-6-hydroxylases.</title>
        <authorList>
            <person name="Funck D."/>
            <person name="Sinn M."/>
            <person name="Forlani G."/>
            <person name="Hartig J.S."/>
        </authorList>
    </citation>
    <scope>FUNCTION</scope>
    <scope>CATALYTIC ACTIVITY</scope>
</reference>
<sequence>MGSDFKAIPLIDISPLVGKIDDPSMVNDEDLLQVVQMLDDACREAGFFYVKGHGIADSLMKQVRDVTQKFFQLPYEEKLKIKMTPQSGYRGYQRVGENITKGKPDMHEAIDCYTPIEPGKYGDLAKPMVGSNLWPKYPSNFDVLLENYISLLRDLSRKIMRGIALALGAPVDAFEGTTAGDPFWVCRLIGYPVSTDIPEEQRTDTGCGAHTDYGLLTLVNQDDDICALEVRNQSGEWIYAKPIPGTFVCNIGDMLKVWSNGIYQPTLHRVVNNSPRYRVSVAFFYESNFDAAVEPVEFCRERTGGVAKYEKVVYGEHLVQKVLTNFVM</sequence>
<proteinExistence type="evidence at protein level"/>
<name>ODD33_ORYSJ</name>
<protein>
    <recommendedName>
        <fullName evidence="6">Homoarginine-6-hydroxylase 2-ODD-233</fullName>
        <ecNumber evidence="1 4">1.14.11.-</ecNumber>
    </recommendedName>
    <alternativeName>
        <fullName evidence="5">2-oxoglutarate-dependent dioxygenase 33</fullName>
        <shortName evidence="6">Os2-ODD33</shortName>
    </alternativeName>
    <alternativeName>
        <fullName evidence="5">Melatonin 2-hydroxylase</fullName>
        <ecNumber evidence="1 2">1.14.11.-</ecNumber>
    </alternativeName>
</protein>
<accession>Q6K332</accession>
<accession>A0A0P0XIU3</accession>
<comment type="function">
    <text evidence="2 4">2-oxoglutarate-dependent dioxygenase catalyzing homoarginine 6-hydroxylation thus producing 6-hydroxy-L-homoarginine (PubMed:38619227). Guanidine (Gd) is in turn synthesized by the spontaneous conversion of 6-hydroxy-L-homoarginine to (S)-2-amino-6-oxohexanoate (RHEA:79843); guanidine is a nitrogen-rich compound that can serve as a defense or signaling substance (PubMed:38619227). Involved in melatonin degradation (PubMed:25728912). Catalyzes the hydroxylation of melatonin to produce 2-hydroxymelatonin (PubMed:25728912).</text>
</comment>
<comment type="catalytic activity">
    <reaction evidence="4">
        <text>L-homoarginine + 2-oxoglutarate + O2 = 6-hydroxy-L-homoarginine + succinate + CO2</text>
        <dbReference type="Rhea" id="RHEA:79839"/>
        <dbReference type="ChEBI" id="CHEBI:15379"/>
        <dbReference type="ChEBI" id="CHEBI:16526"/>
        <dbReference type="ChEBI" id="CHEBI:16810"/>
        <dbReference type="ChEBI" id="CHEBI:30031"/>
        <dbReference type="ChEBI" id="CHEBI:143006"/>
        <dbReference type="ChEBI" id="CHEBI:231270"/>
    </reaction>
</comment>
<comment type="catalytic activity">
    <reaction evidence="2">
        <text>melatonin + 2-oxoglutarate + O2 = 2-hydroxymelatonin + succinate + CO2</text>
        <dbReference type="Rhea" id="RHEA:62512"/>
        <dbReference type="ChEBI" id="CHEBI:15379"/>
        <dbReference type="ChEBI" id="CHEBI:16526"/>
        <dbReference type="ChEBI" id="CHEBI:16796"/>
        <dbReference type="ChEBI" id="CHEBI:16810"/>
        <dbReference type="ChEBI" id="CHEBI:30031"/>
        <dbReference type="ChEBI" id="CHEBI:145792"/>
    </reaction>
    <physiologicalReaction direction="left-to-right" evidence="2">
        <dbReference type="Rhea" id="RHEA:62513"/>
    </physiologicalReaction>
</comment>
<comment type="cofactor">
    <cofactor evidence="1 2">
        <name>Fe(2+)</name>
        <dbReference type="ChEBI" id="CHEBI:29033"/>
    </cofactor>
    <text evidence="1">Binds 1 Fe(2+) ion per subunit.</text>
</comment>
<comment type="cofactor">
    <cofactor evidence="2">
        <name>L-ascorbate</name>
        <dbReference type="ChEBI" id="CHEBI:38290"/>
    </cofactor>
</comment>
<comment type="biophysicochemical properties">
    <kinetics>
        <KM evidence="2">121 uM for melatonin</KM>
        <Vmax evidence="2">1.7 pmol/sec/mg enzyme toward melatonine</Vmax>
    </kinetics>
    <phDependence>
        <text evidence="2">Optimum pH is 8.0.</text>
    </phDependence>
    <temperatureDependence>
        <text evidence="2">Optimum temperature is 30 degrees Celsius.</text>
    </temperatureDependence>
</comment>
<comment type="subcellular location">
    <subcellularLocation>
        <location evidence="3">Cytoplasm</location>
    </subcellularLocation>
</comment>
<comment type="tissue specificity">
    <text evidence="2">Expressed in roots and shoots.</text>
</comment>
<comment type="induction">
    <text evidence="3">Induced by cadmium.</text>
</comment>
<comment type="similarity">
    <text evidence="7">Belongs to the iron/ascorbate-dependent oxidoreductase family.</text>
</comment>
<comment type="sequence caution" evidence="7">
    <conflict type="erroneous initiation">
        <sequence resource="EMBL-CDS" id="BAT07007"/>
    </conflict>
    <text>Extended N-terminus.</text>
</comment>